<organism>
    <name type="scientific">Arabidopsis thaliana</name>
    <name type="common">Mouse-ear cress</name>
    <dbReference type="NCBI Taxonomy" id="3702"/>
    <lineage>
        <taxon>Eukaryota</taxon>
        <taxon>Viridiplantae</taxon>
        <taxon>Streptophyta</taxon>
        <taxon>Embryophyta</taxon>
        <taxon>Tracheophyta</taxon>
        <taxon>Spermatophyta</taxon>
        <taxon>Magnoliopsida</taxon>
        <taxon>eudicotyledons</taxon>
        <taxon>Gunneridae</taxon>
        <taxon>Pentapetalae</taxon>
        <taxon>rosids</taxon>
        <taxon>malvids</taxon>
        <taxon>Brassicales</taxon>
        <taxon>Brassicaceae</taxon>
        <taxon>Camelineae</taxon>
        <taxon>Arabidopsis</taxon>
    </lineage>
</organism>
<reference key="1">
    <citation type="journal article" date="1997" name="DNA Res.">
        <title>Structural analysis of Arabidopsis thaliana chromosome 5. I. Sequence features of the 1.6 Mb regions covered by twenty physically assigned P1 clones.</title>
        <authorList>
            <person name="Sato S."/>
            <person name="Kotani H."/>
            <person name="Nakamura Y."/>
            <person name="Kaneko T."/>
            <person name="Asamizu E."/>
            <person name="Fukami M."/>
            <person name="Miyajima N."/>
            <person name="Tabata S."/>
        </authorList>
    </citation>
    <scope>NUCLEOTIDE SEQUENCE [LARGE SCALE GENOMIC DNA]</scope>
    <source>
        <strain>cv. Columbia</strain>
    </source>
</reference>
<reference key="2">
    <citation type="journal article" date="2017" name="Plant J.">
        <title>Araport11: a complete reannotation of the Arabidopsis thaliana reference genome.</title>
        <authorList>
            <person name="Cheng C.Y."/>
            <person name="Krishnakumar V."/>
            <person name="Chan A.P."/>
            <person name="Thibaud-Nissen F."/>
            <person name="Schobel S."/>
            <person name="Town C.D."/>
        </authorList>
    </citation>
    <scope>GENOME REANNOTATION</scope>
    <source>
        <strain>cv. Columbia</strain>
    </source>
</reference>
<reference key="3">
    <citation type="journal article" date="2003" name="Science">
        <title>Empirical analysis of transcriptional activity in the Arabidopsis genome.</title>
        <authorList>
            <person name="Yamada K."/>
            <person name="Lim J."/>
            <person name="Dale J.M."/>
            <person name="Chen H."/>
            <person name="Shinn P."/>
            <person name="Palm C.J."/>
            <person name="Southwick A.M."/>
            <person name="Wu H.C."/>
            <person name="Kim C.J."/>
            <person name="Nguyen M."/>
            <person name="Pham P.K."/>
            <person name="Cheuk R.F."/>
            <person name="Karlin-Newmann G."/>
            <person name="Liu S.X."/>
            <person name="Lam B."/>
            <person name="Sakano H."/>
            <person name="Wu T."/>
            <person name="Yu G."/>
            <person name="Miranda M."/>
            <person name="Quach H.L."/>
            <person name="Tripp M."/>
            <person name="Chang C.H."/>
            <person name="Lee J.M."/>
            <person name="Toriumi M.J."/>
            <person name="Chan M.M."/>
            <person name="Tang C.C."/>
            <person name="Onodera C.S."/>
            <person name="Deng J.M."/>
            <person name="Akiyama K."/>
            <person name="Ansari Y."/>
            <person name="Arakawa T."/>
            <person name="Banh J."/>
            <person name="Banno F."/>
            <person name="Bowser L."/>
            <person name="Brooks S.Y."/>
            <person name="Carninci P."/>
            <person name="Chao Q."/>
            <person name="Choy N."/>
            <person name="Enju A."/>
            <person name="Goldsmith A.D."/>
            <person name="Gurjal M."/>
            <person name="Hansen N.F."/>
            <person name="Hayashizaki Y."/>
            <person name="Johnson-Hopson C."/>
            <person name="Hsuan V.W."/>
            <person name="Iida K."/>
            <person name="Karnes M."/>
            <person name="Khan S."/>
            <person name="Koesema E."/>
            <person name="Ishida J."/>
            <person name="Jiang P.X."/>
            <person name="Jones T."/>
            <person name="Kawai J."/>
            <person name="Kamiya A."/>
            <person name="Meyers C."/>
            <person name="Nakajima M."/>
            <person name="Narusaka M."/>
            <person name="Seki M."/>
            <person name="Sakurai T."/>
            <person name="Satou M."/>
            <person name="Tamse R."/>
            <person name="Vaysberg M."/>
            <person name="Wallender E.K."/>
            <person name="Wong C."/>
            <person name="Yamamura Y."/>
            <person name="Yuan S."/>
            <person name="Shinozaki K."/>
            <person name="Davis R.W."/>
            <person name="Theologis A."/>
            <person name="Ecker J.R."/>
        </authorList>
    </citation>
    <scope>NUCLEOTIDE SEQUENCE [LARGE SCALE MRNA] OF 2-881</scope>
    <source>
        <strain>cv. Columbia</strain>
    </source>
</reference>
<reference key="4">
    <citation type="journal article" date="2013" name="PLoS ONE">
        <title>Genome-wide comparative in silico analysis of the RNA helicase gene family in Zea mays and Glycine max: a comparison with Arabidopsis and Oryza sativa.</title>
        <authorList>
            <person name="Xu R."/>
            <person name="Zhang S."/>
            <person name="Huang J."/>
            <person name="Zheng C."/>
        </authorList>
    </citation>
    <scope>GENE FAMILY</scope>
</reference>
<proteinExistence type="evidence at transcript level"/>
<protein>
    <recommendedName>
        <fullName>Putative SWI/SNF-related matrix-associated actin-dependent regulator of chromatin subfamily A member 3-like 1</fullName>
        <shortName>SMARCA3-like protein 1</shortName>
        <ecNumber>3.6.4.-</ecNumber>
    </recommendedName>
</protein>
<evidence type="ECO:0000250" key="1"/>
<evidence type="ECO:0000255" key="2">
    <source>
        <dbReference type="PROSITE-ProRule" id="PRU00175"/>
    </source>
</evidence>
<evidence type="ECO:0000255" key="3">
    <source>
        <dbReference type="PROSITE-ProRule" id="PRU00541"/>
    </source>
</evidence>
<evidence type="ECO:0000255" key="4">
    <source>
        <dbReference type="PROSITE-ProRule" id="PRU00542"/>
    </source>
</evidence>
<evidence type="ECO:0000256" key="5">
    <source>
        <dbReference type="SAM" id="MobiDB-lite"/>
    </source>
</evidence>
<evidence type="ECO:0000305" key="6"/>
<dbReference type="EC" id="3.6.4.-"/>
<dbReference type="EMBL" id="AB005245">
    <property type="protein sequence ID" value="BAB11535.1"/>
    <property type="molecule type" value="Genomic_DNA"/>
</dbReference>
<dbReference type="EMBL" id="CP002688">
    <property type="protein sequence ID" value="AED90832.2"/>
    <property type="molecule type" value="Genomic_DNA"/>
</dbReference>
<dbReference type="EMBL" id="AY093185">
    <property type="protein sequence ID" value="AAM13184.1"/>
    <property type="molecule type" value="mRNA"/>
</dbReference>
<dbReference type="EMBL" id="AY093211">
    <property type="protein sequence ID" value="AAM13210.1"/>
    <property type="status" value="ALT_INIT"/>
    <property type="molecule type" value="mRNA"/>
</dbReference>
<dbReference type="EMBL" id="BT008802">
    <property type="protein sequence ID" value="AAP68241.1"/>
    <property type="molecule type" value="mRNA"/>
</dbReference>
<dbReference type="RefSeq" id="NP_196132.3">
    <property type="nucleotide sequence ID" value="NM_120595.3"/>
</dbReference>
<dbReference type="SMR" id="Q9FF61"/>
<dbReference type="BioGRID" id="15674">
    <property type="interactions" value="2"/>
</dbReference>
<dbReference type="FunCoup" id="Q9FF61">
    <property type="interactions" value="2748"/>
</dbReference>
<dbReference type="STRING" id="3702.Q9FF61"/>
<dbReference type="iPTMnet" id="Q9FF61"/>
<dbReference type="PaxDb" id="3702-AT5G05130.1"/>
<dbReference type="ProteomicsDB" id="232640"/>
<dbReference type="EnsemblPlants" id="AT5G05130.1">
    <property type="protein sequence ID" value="AT5G05130.1"/>
    <property type="gene ID" value="AT5G05130"/>
</dbReference>
<dbReference type="GeneID" id="830395"/>
<dbReference type="Gramene" id="AT5G05130.1">
    <property type="protein sequence ID" value="AT5G05130.1"/>
    <property type="gene ID" value="AT5G05130"/>
</dbReference>
<dbReference type="KEGG" id="ath:AT5G05130"/>
<dbReference type="Araport" id="AT5G05130"/>
<dbReference type="TAIR" id="AT5G05130"/>
<dbReference type="eggNOG" id="KOG1001">
    <property type="taxonomic scope" value="Eukaryota"/>
</dbReference>
<dbReference type="HOGENOM" id="CLU_000315_2_5_1"/>
<dbReference type="InParanoid" id="Q9FF61"/>
<dbReference type="OMA" id="ETTVWRL"/>
<dbReference type="PhylomeDB" id="Q9FF61"/>
<dbReference type="PRO" id="PR:Q9FF61"/>
<dbReference type="Proteomes" id="UP000006548">
    <property type="component" value="Chromosome 5"/>
</dbReference>
<dbReference type="ExpressionAtlas" id="Q9FF61">
    <property type="expression patterns" value="baseline and differential"/>
</dbReference>
<dbReference type="GO" id="GO:0005634">
    <property type="term" value="C:nucleus"/>
    <property type="evidence" value="ECO:0007669"/>
    <property type="project" value="UniProtKB-SubCell"/>
</dbReference>
<dbReference type="GO" id="GO:0005524">
    <property type="term" value="F:ATP binding"/>
    <property type="evidence" value="ECO:0007669"/>
    <property type="project" value="UniProtKB-KW"/>
</dbReference>
<dbReference type="GO" id="GO:0004386">
    <property type="term" value="F:helicase activity"/>
    <property type="evidence" value="ECO:0007669"/>
    <property type="project" value="UniProtKB-KW"/>
</dbReference>
<dbReference type="GO" id="GO:0016818">
    <property type="term" value="F:hydrolase activity, acting on acid anhydrides, in phosphorus-containing anhydrides"/>
    <property type="evidence" value="ECO:0007669"/>
    <property type="project" value="InterPro"/>
</dbReference>
<dbReference type="GO" id="GO:0003676">
    <property type="term" value="F:nucleic acid binding"/>
    <property type="evidence" value="ECO:0007669"/>
    <property type="project" value="InterPro"/>
</dbReference>
<dbReference type="GO" id="GO:0008270">
    <property type="term" value="F:zinc ion binding"/>
    <property type="evidence" value="ECO:0007669"/>
    <property type="project" value="UniProtKB-KW"/>
</dbReference>
<dbReference type="GO" id="GO:0006325">
    <property type="term" value="P:chromatin organization"/>
    <property type="evidence" value="ECO:0007669"/>
    <property type="project" value="UniProtKB-KW"/>
</dbReference>
<dbReference type="CDD" id="cd18071">
    <property type="entry name" value="DEXHc_HLTF1_SMARC3"/>
    <property type="match status" value="1"/>
</dbReference>
<dbReference type="CDD" id="cd16509">
    <property type="entry name" value="RING-HC_HLTF"/>
    <property type="match status" value="1"/>
</dbReference>
<dbReference type="CDD" id="cd18793">
    <property type="entry name" value="SF2_C_SNF"/>
    <property type="match status" value="1"/>
</dbReference>
<dbReference type="Gene3D" id="3.30.70.2330">
    <property type="match status" value="1"/>
</dbReference>
<dbReference type="Gene3D" id="3.40.50.300">
    <property type="entry name" value="P-loop containing nucleotide triphosphate hydrolases"/>
    <property type="match status" value="1"/>
</dbReference>
<dbReference type="Gene3D" id="3.40.50.10810">
    <property type="entry name" value="Tandem AAA-ATPase domain"/>
    <property type="match status" value="2"/>
</dbReference>
<dbReference type="Gene3D" id="3.30.40.10">
    <property type="entry name" value="Zinc/RING finger domain, C3HC4 (zinc finger)"/>
    <property type="match status" value="1"/>
</dbReference>
<dbReference type="InterPro" id="IPR014001">
    <property type="entry name" value="Helicase_ATP-bd"/>
</dbReference>
<dbReference type="InterPro" id="IPR001650">
    <property type="entry name" value="Helicase_C-like"/>
</dbReference>
<dbReference type="InterPro" id="IPR014905">
    <property type="entry name" value="HIRAN"/>
</dbReference>
<dbReference type="InterPro" id="IPR027417">
    <property type="entry name" value="P-loop_NTPase"/>
</dbReference>
<dbReference type="InterPro" id="IPR038718">
    <property type="entry name" value="SNF2-like_sf"/>
</dbReference>
<dbReference type="InterPro" id="IPR049730">
    <property type="entry name" value="SNF2/RAD54-like_C"/>
</dbReference>
<dbReference type="InterPro" id="IPR000330">
    <property type="entry name" value="SNF2_N"/>
</dbReference>
<dbReference type="InterPro" id="IPR050628">
    <property type="entry name" value="SNF2_RAD54_helicase_TF"/>
</dbReference>
<dbReference type="InterPro" id="IPR001841">
    <property type="entry name" value="Znf_RING"/>
</dbReference>
<dbReference type="InterPro" id="IPR013083">
    <property type="entry name" value="Znf_RING/FYVE/PHD"/>
</dbReference>
<dbReference type="InterPro" id="IPR017907">
    <property type="entry name" value="Znf_RING_CS"/>
</dbReference>
<dbReference type="PANTHER" id="PTHR45626:SF17">
    <property type="entry name" value="HELICASE-LIKE TRANSCRIPTION FACTOR"/>
    <property type="match status" value="1"/>
</dbReference>
<dbReference type="PANTHER" id="PTHR45626">
    <property type="entry name" value="TRANSCRIPTION TERMINATION FACTOR 2-RELATED"/>
    <property type="match status" value="1"/>
</dbReference>
<dbReference type="Pfam" id="PF00271">
    <property type="entry name" value="Helicase_C"/>
    <property type="match status" value="1"/>
</dbReference>
<dbReference type="Pfam" id="PF08797">
    <property type="entry name" value="HIRAN"/>
    <property type="match status" value="1"/>
</dbReference>
<dbReference type="Pfam" id="PF00176">
    <property type="entry name" value="SNF2-rel_dom"/>
    <property type="match status" value="1"/>
</dbReference>
<dbReference type="Pfam" id="PF13920">
    <property type="entry name" value="zf-C3HC4_3"/>
    <property type="match status" value="1"/>
</dbReference>
<dbReference type="SMART" id="SM00487">
    <property type="entry name" value="DEXDc"/>
    <property type="match status" value="1"/>
</dbReference>
<dbReference type="SMART" id="SM00490">
    <property type="entry name" value="HELICc"/>
    <property type="match status" value="1"/>
</dbReference>
<dbReference type="SMART" id="SM00910">
    <property type="entry name" value="HIRAN"/>
    <property type="match status" value="1"/>
</dbReference>
<dbReference type="SMART" id="SM00184">
    <property type="entry name" value="RING"/>
    <property type="match status" value="1"/>
</dbReference>
<dbReference type="SUPFAM" id="SSF52540">
    <property type="entry name" value="P-loop containing nucleoside triphosphate hydrolases"/>
    <property type="match status" value="2"/>
</dbReference>
<dbReference type="SUPFAM" id="SSF57850">
    <property type="entry name" value="RING/U-box"/>
    <property type="match status" value="1"/>
</dbReference>
<dbReference type="PROSITE" id="PS51192">
    <property type="entry name" value="HELICASE_ATP_BIND_1"/>
    <property type="match status" value="1"/>
</dbReference>
<dbReference type="PROSITE" id="PS51194">
    <property type="entry name" value="HELICASE_CTER"/>
    <property type="match status" value="1"/>
</dbReference>
<dbReference type="PROSITE" id="PS00518">
    <property type="entry name" value="ZF_RING_1"/>
    <property type="match status" value="1"/>
</dbReference>
<dbReference type="PROSITE" id="PS50089">
    <property type="entry name" value="ZF_RING_2"/>
    <property type="match status" value="1"/>
</dbReference>
<sequence length="881" mass="98616">MRVLKYFRAPSSLRHRSSPMAQFLRRFSSSPMANEDEFQSPVEPSQQQSQDCVSESYLIGFVIANIVGLKYYSGRINGREMVGLVREPLNVYDNNAIRVLNTRSEQVGHIERTVAAVLAPMIDSHTIVVEGIVPNTRSNSNRYRIPCQIHVFAKLEASSTVKSTISRGGLVLISESDTSFGLSEAVVVKEQMGNGDKRSVDKIFKLVDENVKLMGKLVAAEPPREVIKSELFAHQKEGLGWLLHREKSGELPPFWEEKDGEFLNTLTNYRSDKRPDPLRGGVFADDMGLGKTLTLLSLIAFDRYGNASTSTPTEEPLDGEGDKIEKKGKKRGRGKSSESVTRKKLKTDDVVGMNVSQKTTLIVCPPSVISAWITQLEEHTVPGILKVYMYHGGERTDDVNELMKYDIVLTTYGTLAVEESWEDSPVKKMEWLRIILDEAHTIKNANAQQSRVVCKLKASRRWAVTGTPIQNGSFDLYSLMAFLRFEPFSIKSYWQSLIQRPLGQGNKKGLSRLQVLMATISLRRTKEKSLIGLPPKTVETCYVELSPEERQLYDHMEGEAKGVVQNLINNGSLMRNYSTVLSIILRLRQLCDDMSLCPPELRSFTTSTSVEDVTDKPELLQKLVAALQDGEDFDCPICISPPTNIIITRCAHIFCRACILQTLQRSKPLCPLCRGSLTQSDLYNAPPPPPDSSNTDGEDAKSSTKSSKVSALLSLLMASRQENPNTKSVVFSQFRKMLLLLETPLKAAGFTILRLDGAMTVKKRTQVIGEFGNPELTGPVVLLASLKASGTGINLTAASRVYLFDPWWNPAVEEQAMDRIHRIGQKQEVKMIRMIARNSIEERVLELQQKKKNLANEAFKRRQKKDEREVNVEDVVALMSL</sequence>
<keyword id="KW-0010">Activator</keyword>
<keyword id="KW-0067">ATP-binding</keyword>
<keyword id="KW-0156">Chromatin regulator</keyword>
<keyword id="KW-0347">Helicase</keyword>
<keyword id="KW-0378">Hydrolase</keyword>
<keyword id="KW-0479">Metal-binding</keyword>
<keyword id="KW-0547">Nucleotide-binding</keyword>
<keyword id="KW-0539">Nucleus</keyword>
<keyword id="KW-1185">Reference proteome</keyword>
<keyword id="KW-0804">Transcription</keyword>
<keyword id="KW-0862">Zinc</keyword>
<keyword id="KW-0863">Zinc-finger</keyword>
<feature type="chain" id="PRO_0000056187" description="Putative SWI/SNF-related matrix-associated actin-dependent regulator of chromatin subfamily A member 3-like 1">
    <location>
        <begin position="1"/>
        <end position="881"/>
    </location>
</feature>
<feature type="domain" description="Helicase ATP-binding" evidence="3">
    <location>
        <begin position="272"/>
        <end position="486"/>
    </location>
</feature>
<feature type="domain" description="Helicase C-terminal" evidence="4">
    <location>
        <begin position="711"/>
        <end position="876"/>
    </location>
</feature>
<feature type="zinc finger region" description="RING-type" evidence="2">
    <location>
        <begin position="635"/>
        <end position="674"/>
    </location>
</feature>
<feature type="region of interest" description="Disordered" evidence="5">
    <location>
        <begin position="308"/>
        <end position="343"/>
    </location>
</feature>
<feature type="region of interest" description="Disordered" evidence="5">
    <location>
        <begin position="681"/>
        <end position="703"/>
    </location>
</feature>
<feature type="short sequence motif" description="DEAH box">
    <location>
        <begin position="437"/>
        <end position="440"/>
    </location>
</feature>
<feature type="binding site" evidence="3">
    <location>
        <begin position="285"/>
        <end position="292"/>
    </location>
    <ligand>
        <name>ATP</name>
        <dbReference type="ChEBI" id="CHEBI:30616"/>
    </ligand>
</feature>
<feature type="sequence conflict" description="In Ref. 3; AAM13210." evidence="6" ref="3">
    <original>R</original>
    <variation>G</variation>
    <location>
        <position position="2"/>
    </location>
</feature>
<gene>
    <name type="ordered locus">At5g05130</name>
    <name type="ORF">MUG13.1</name>
</gene>
<accession>Q9FF61</accession>
<accession>F4JZ78</accession>
<accession>Q8RWB4</accession>
<accession>Q8RWC7</accession>
<comment type="function">
    <text evidence="1">Possesses intrinsic ATP-dependent nucleosome-remodeling activity. This activity may be required for transcriptional activation or repression of specific target promoters (By similarity).</text>
</comment>
<comment type="subcellular location">
    <subcellularLocation>
        <location evidence="1">Nucleus</location>
    </subcellularLocation>
</comment>
<comment type="similarity">
    <text evidence="6">Belongs to the SNF2/RAD54 helicase family. RAD16 subfamily.</text>
</comment>
<comment type="sequence caution" evidence="6">
    <conflict type="erroneous initiation">
        <sequence resource="EMBL-CDS" id="AAM13210"/>
    </conflict>
    <text>Truncated N-terminus.</text>
</comment>
<name>SM3L1_ARATH</name>